<comment type="function">
    <text evidence="1">Tyrosine phosphatase that specifically dephosphorylates 'Tyr-142' of histone H2AX (H2AXY142ph). 'Tyr-142' phosphorylation of histone H2AX plays a central role in DNA repair and acts as a mark that distinguishes between apoptotic and repair responses to genotoxic stress. Promotes efficient DNA repair by dephosphorylating H2AX, promoting the recruitment of DNA repair complexes containing MDC1. Its function as histone phosphatase probably explains its role in transcription regulation during organogenesis. May be involved in development of the eye (By similarity).</text>
</comment>
<comment type="catalytic activity">
    <reaction>
        <text>O-phospho-L-tyrosyl-[protein] + H2O = L-tyrosyl-[protein] + phosphate</text>
        <dbReference type="Rhea" id="RHEA:10684"/>
        <dbReference type="Rhea" id="RHEA-COMP:10136"/>
        <dbReference type="Rhea" id="RHEA-COMP:20101"/>
        <dbReference type="ChEBI" id="CHEBI:15377"/>
        <dbReference type="ChEBI" id="CHEBI:43474"/>
        <dbReference type="ChEBI" id="CHEBI:46858"/>
        <dbReference type="ChEBI" id="CHEBI:61978"/>
        <dbReference type="EC" id="3.1.3.48"/>
    </reaction>
</comment>
<comment type="cofactor">
    <cofactor evidence="2">
        <name>Mg(2+)</name>
        <dbReference type="ChEBI" id="CHEBI:18420"/>
    </cofactor>
    <text evidence="2">Binds 1 Mg(2+) ion per subunit.</text>
</comment>
<comment type="subcellular location">
    <subcellularLocation>
        <location evidence="1">Cytoplasm</location>
    </subcellularLocation>
    <subcellularLocation>
        <location evidence="1">Nucleus</location>
    </subcellularLocation>
</comment>
<comment type="similarity">
    <text evidence="3">Belongs to the HAD-like hydrolase superfamily. EYA family.</text>
</comment>
<protein>
    <recommendedName>
        <fullName evidence="3">Protein phosphatase EYA4</fullName>
        <ecNumber>3.1.3.48</ecNumber>
    </recommendedName>
    <alternativeName>
        <fullName>Eyes absent homolog 4</fullName>
    </alternativeName>
</protein>
<name>EYA4_TAKRU</name>
<reference key="1">
    <citation type="journal article" date="1999" name="Hum. Mol. Genet.">
        <title>EYA4, a novel vertebrate gene related to Drosophila eyes absent.</title>
        <authorList>
            <person name="Borsani G."/>
            <person name="DeGrandi A."/>
            <person name="Ballabio A."/>
            <person name="Bulfone A."/>
            <person name="Bernard L."/>
            <person name="Banfi S."/>
            <person name="Gattuso C."/>
            <person name="Mariani M."/>
            <person name="Dixon M."/>
            <person name="Donnai D."/>
            <person name="Metcalfe K."/>
            <person name="Winter R."/>
            <person name="Robertson M."/>
            <person name="Axton R."/>
            <person name="Brown A."/>
            <person name="van Heyningen V."/>
            <person name="Hanson I."/>
        </authorList>
    </citation>
    <scope>NUCLEOTIDE SEQUENCE [GENOMIC DNA]</scope>
</reference>
<dbReference type="EC" id="3.1.3.48"/>
<dbReference type="EMBL" id="AJ007998">
    <property type="protein sequence ID" value="CAA07821.1"/>
    <property type="molecule type" value="Genomic_DNA"/>
</dbReference>
<dbReference type="EMBL" id="AJ007999">
    <property type="protein sequence ID" value="CAA07821.1"/>
    <property type="status" value="JOINED"/>
    <property type="molecule type" value="Genomic_DNA"/>
</dbReference>
<dbReference type="EMBL" id="AJ008000">
    <property type="protein sequence ID" value="CAA07821.1"/>
    <property type="status" value="JOINED"/>
    <property type="molecule type" value="Genomic_DNA"/>
</dbReference>
<dbReference type="EMBL" id="AJ008001">
    <property type="protein sequence ID" value="CAA07821.1"/>
    <property type="status" value="JOINED"/>
    <property type="molecule type" value="Genomic_DNA"/>
</dbReference>
<dbReference type="SMR" id="Q9YHA1"/>
<dbReference type="STRING" id="31033.ENSTRUP00000087636"/>
<dbReference type="eggNOG" id="KOG3107">
    <property type="taxonomic scope" value="Eukaryota"/>
</dbReference>
<dbReference type="InParanoid" id="Q9YHA1"/>
<dbReference type="Proteomes" id="UP000005226">
    <property type="component" value="Unplaced"/>
</dbReference>
<dbReference type="GO" id="GO:0005737">
    <property type="term" value="C:cytoplasm"/>
    <property type="evidence" value="ECO:0007669"/>
    <property type="project" value="UniProtKB-SubCell"/>
</dbReference>
<dbReference type="GO" id="GO:0005634">
    <property type="term" value="C:nucleus"/>
    <property type="evidence" value="ECO:0007669"/>
    <property type="project" value="UniProtKB-SubCell"/>
</dbReference>
<dbReference type="GO" id="GO:0004725">
    <property type="term" value="F:protein tyrosine phosphatase activity"/>
    <property type="evidence" value="ECO:0007669"/>
    <property type="project" value="UniProtKB-EC"/>
</dbReference>
<dbReference type="GO" id="GO:0030154">
    <property type="term" value="P:cell differentiation"/>
    <property type="evidence" value="ECO:0007669"/>
    <property type="project" value="TreeGrafter"/>
</dbReference>
<dbReference type="GO" id="GO:0006325">
    <property type="term" value="P:chromatin organization"/>
    <property type="evidence" value="ECO:0007669"/>
    <property type="project" value="UniProtKB-KW"/>
</dbReference>
<dbReference type="GO" id="GO:0006281">
    <property type="term" value="P:DNA repair"/>
    <property type="evidence" value="ECO:0007669"/>
    <property type="project" value="UniProtKB-KW"/>
</dbReference>
<dbReference type="GO" id="GO:2001240">
    <property type="term" value="P:negative regulation of extrinsic apoptotic signaling pathway in absence of ligand"/>
    <property type="evidence" value="ECO:0007669"/>
    <property type="project" value="TreeGrafter"/>
</dbReference>
<dbReference type="GO" id="GO:0045739">
    <property type="term" value="P:positive regulation of DNA repair"/>
    <property type="evidence" value="ECO:0007669"/>
    <property type="project" value="TreeGrafter"/>
</dbReference>
<dbReference type="FunFam" id="3.40.50.12350:FF:000006">
    <property type="entry name" value="Eyes absent homolog 4"/>
    <property type="match status" value="1"/>
</dbReference>
<dbReference type="Gene3D" id="3.40.50.12350">
    <property type="match status" value="1"/>
</dbReference>
<dbReference type="InterPro" id="IPR028472">
    <property type="entry name" value="EYA"/>
</dbReference>
<dbReference type="InterPro" id="IPR038102">
    <property type="entry name" value="EYA_dom_sf"/>
</dbReference>
<dbReference type="PANTHER" id="PTHR10190">
    <property type="entry name" value="EYES ABSENT"/>
    <property type="match status" value="1"/>
</dbReference>
<dbReference type="PANTHER" id="PTHR10190:SF17">
    <property type="entry name" value="EYES ABSENT HOMOLOG 4"/>
    <property type="match status" value="1"/>
</dbReference>
<keyword id="KW-0010">Activator</keyword>
<keyword id="KW-0156">Chromatin regulator</keyword>
<keyword id="KW-0963">Cytoplasm</keyword>
<keyword id="KW-0217">Developmental protein</keyword>
<keyword id="KW-0227">DNA damage</keyword>
<keyword id="KW-0234">DNA repair</keyword>
<keyword id="KW-0378">Hydrolase</keyword>
<keyword id="KW-0460">Magnesium</keyword>
<keyword id="KW-0539">Nucleus</keyword>
<keyword id="KW-0904">Protein phosphatase</keyword>
<keyword id="KW-1185">Reference proteome</keyword>
<keyword id="KW-0804">Transcription</keyword>
<keyword id="KW-0805">Transcription regulation</keyword>
<evidence type="ECO:0000250" key="1"/>
<evidence type="ECO:0000250" key="2">
    <source>
        <dbReference type="UniProtKB" id="O00167"/>
    </source>
</evidence>
<evidence type="ECO:0000305" key="3"/>
<sequence>RKLAFRYRRVKELYTTYKNNVGGLLGPAKRDAWLQLRAEVEALTDSWLTHALKSLSIISSRSNCVNVLVTTTQLIPALAKVLLYSLGAVFPIENIYSATKIGKESCFERIVSRFGTNIT</sequence>
<organism>
    <name type="scientific">Takifugu rubripes</name>
    <name type="common">Japanese pufferfish</name>
    <name type="synonym">Fugu rubripes</name>
    <dbReference type="NCBI Taxonomy" id="31033"/>
    <lineage>
        <taxon>Eukaryota</taxon>
        <taxon>Metazoa</taxon>
        <taxon>Chordata</taxon>
        <taxon>Craniata</taxon>
        <taxon>Vertebrata</taxon>
        <taxon>Euteleostomi</taxon>
        <taxon>Actinopterygii</taxon>
        <taxon>Neopterygii</taxon>
        <taxon>Teleostei</taxon>
        <taxon>Neoteleostei</taxon>
        <taxon>Acanthomorphata</taxon>
        <taxon>Eupercaria</taxon>
        <taxon>Tetraodontiformes</taxon>
        <taxon>Tetradontoidea</taxon>
        <taxon>Tetraodontidae</taxon>
        <taxon>Takifugu</taxon>
    </lineage>
</organism>
<gene>
    <name type="primary">eya4</name>
</gene>
<proteinExistence type="inferred from homology"/>
<feature type="chain" id="PRO_0000218654" description="Protein phosphatase EYA4">
    <location>
        <begin position="1" status="less than"/>
        <end position="119" status="greater than"/>
    </location>
</feature>
<feature type="non-terminal residue">
    <location>
        <position position="1"/>
    </location>
</feature>
<feature type="non-terminal residue">
    <location>
        <position position="119"/>
    </location>
</feature>
<accession>Q9YHA1</accession>